<feature type="chain" id="PRO_0000197497" description="Glutathione synthetase">
    <location>
        <begin position="1"/>
        <end position="316"/>
    </location>
</feature>
<feature type="domain" description="ATP-grasp" evidence="2">
    <location>
        <begin position="124"/>
        <end position="311"/>
    </location>
</feature>
<feature type="binding site" evidence="2">
    <location>
        <begin position="151"/>
        <end position="208"/>
    </location>
    <ligand>
        <name>ATP</name>
        <dbReference type="ChEBI" id="CHEBI:30616"/>
    </ligand>
</feature>
<feature type="binding site" evidence="2">
    <location>
        <position position="282"/>
    </location>
    <ligand>
        <name>Mg(2+)</name>
        <dbReference type="ChEBI" id="CHEBI:18420"/>
    </ligand>
</feature>
<feature type="binding site" evidence="2">
    <location>
        <position position="284"/>
    </location>
    <ligand>
        <name>Mg(2+)</name>
        <dbReference type="ChEBI" id="CHEBI:18420"/>
    </ligand>
</feature>
<reference key="1">
    <citation type="journal article" date="2002" name="Nature">
        <title>Comparison of the genomes of two Xanthomonas pathogens with differing host specificities.</title>
        <authorList>
            <person name="da Silva A.C.R."/>
            <person name="Ferro J.A."/>
            <person name="Reinach F.C."/>
            <person name="Farah C.S."/>
            <person name="Furlan L.R."/>
            <person name="Quaggio R.B."/>
            <person name="Monteiro-Vitorello C.B."/>
            <person name="Van Sluys M.A."/>
            <person name="Almeida N.F. Jr."/>
            <person name="Alves L.M.C."/>
            <person name="do Amaral A.M."/>
            <person name="Bertolini M.C."/>
            <person name="Camargo L.E.A."/>
            <person name="Camarotte G."/>
            <person name="Cannavan F."/>
            <person name="Cardozo J."/>
            <person name="Chambergo F."/>
            <person name="Ciapina L.P."/>
            <person name="Cicarelli R.M.B."/>
            <person name="Coutinho L.L."/>
            <person name="Cursino-Santos J.R."/>
            <person name="El-Dorry H."/>
            <person name="Faria J.B."/>
            <person name="Ferreira A.J.S."/>
            <person name="Ferreira R.C.C."/>
            <person name="Ferro M.I.T."/>
            <person name="Formighieri E.F."/>
            <person name="Franco M.C."/>
            <person name="Greggio C.C."/>
            <person name="Gruber A."/>
            <person name="Katsuyama A.M."/>
            <person name="Kishi L.T."/>
            <person name="Leite R.P."/>
            <person name="Lemos E.G.M."/>
            <person name="Lemos M.V.F."/>
            <person name="Locali E.C."/>
            <person name="Machado M.A."/>
            <person name="Madeira A.M.B.N."/>
            <person name="Martinez-Rossi N.M."/>
            <person name="Martins E.C."/>
            <person name="Meidanis J."/>
            <person name="Menck C.F.M."/>
            <person name="Miyaki C.Y."/>
            <person name="Moon D.H."/>
            <person name="Moreira L.M."/>
            <person name="Novo M.T.M."/>
            <person name="Okura V.K."/>
            <person name="Oliveira M.C."/>
            <person name="Oliveira V.R."/>
            <person name="Pereira H.A."/>
            <person name="Rossi A."/>
            <person name="Sena J.A.D."/>
            <person name="Silva C."/>
            <person name="de Souza R.F."/>
            <person name="Spinola L.A.F."/>
            <person name="Takita M.A."/>
            <person name="Tamura R.E."/>
            <person name="Teixeira E.C."/>
            <person name="Tezza R.I.D."/>
            <person name="Trindade dos Santos M."/>
            <person name="Truffi D."/>
            <person name="Tsai S.M."/>
            <person name="White F.F."/>
            <person name="Setubal J.C."/>
            <person name="Kitajima J.P."/>
        </authorList>
    </citation>
    <scope>NUCLEOTIDE SEQUENCE [LARGE SCALE GENOMIC DNA]</scope>
    <source>
        <strain>ATCC 33913 / DSM 3586 / NCPPB 528 / LMG 568 / P 25</strain>
    </source>
</reference>
<name>GSHB_XANCP</name>
<proteinExistence type="inferred from homology"/>
<evidence type="ECO:0000250" key="1"/>
<evidence type="ECO:0000255" key="2">
    <source>
        <dbReference type="HAMAP-Rule" id="MF_00162"/>
    </source>
</evidence>
<accession>Q8P6P1</accession>
<keyword id="KW-0067">ATP-binding</keyword>
<keyword id="KW-0317">Glutathione biosynthesis</keyword>
<keyword id="KW-0436">Ligase</keyword>
<keyword id="KW-0460">Magnesium</keyword>
<keyword id="KW-0464">Manganese</keyword>
<keyword id="KW-0479">Metal-binding</keyword>
<keyword id="KW-0547">Nucleotide-binding</keyword>
<keyword id="KW-1185">Reference proteome</keyword>
<comment type="catalytic activity">
    <reaction evidence="2">
        <text>gamma-L-glutamyl-L-cysteine + glycine + ATP = glutathione + ADP + phosphate + H(+)</text>
        <dbReference type="Rhea" id="RHEA:13557"/>
        <dbReference type="ChEBI" id="CHEBI:15378"/>
        <dbReference type="ChEBI" id="CHEBI:30616"/>
        <dbReference type="ChEBI" id="CHEBI:43474"/>
        <dbReference type="ChEBI" id="CHEBI:57305"/>
        <dbReference type="ChEBI" id="CHEBI:57925"/>
        <dbReference type="ChEBI" id="CHEBI:58173"/>
        <dbReference type="ChEBI" id="CHEBI:456216"/>
        <dbReference type="EC" id="6.3.2.3"/>
    </reaction>
</comment>
<comment type="cofactor">
    <cofactor evidence="1">
        <name>Mg(2+)</name>
        <dbReference type="ChEBI" id="CHEBI:18420"/>
    </cofactor>
    <cofactor evidence="1">
        <name>Mn(2+)</name>
        <dbReference type="ChEBI" id="CHEBI:29035"/>
    </cofactor>
    <text evidence="1">Binds 1 Mg(2+) or Mn(2+) ion per subunit.</text>
</comment>
<comment type="pathway">
    <text evidence="2">Sulfur metabolism; glutathione biosynthesis; glutathione from L-cysteine and L-glutamate: step 2/2.</text>
</comment>
<comment type="similarity">
    <text evidence="2">Belongs to the prokaryotic GSH synthase family.</text>
</comment>
<sequence length="316" mass="34173">MSLDVVVVMDPIASIKIAKDTTFAMLLEAQRRGHRLHYVRPGGLSLHEGRAVAQVAPLSVREDKASWFTLGAFTELVFGPGQVVLMRKDPPVDAEFIYDTQVLAVAQRAGAQVVNDPQGLRDYNEKLAALLFPQCCPPTLVSRDAAALKAFVLAHGQAVLKPLDGMGGRSIFRSGTGDPNLNVILETLTDGGRKLTLAQRFIPDITAGDKRILLVDGEPVDYCLARIPQGDEFRGNLAAGGRGEGRPLSERDRWIAAQVGPEMKRRGMRFVGLDVIGDYLTEVNVTSPTCVRELDAQFGLNIAGLLFDAIEAGTAQ</sequence>
<protein>
    <recommendedName>
        <fullName evidence="2">Glutathione synthetase</fullName>
        <ecNumber evidence="2">6.3.2.3</ecNumber>
    </recommendedName>
    <alternativeName>
        <fullName evidence="2">GSH synthetase</fullName>
        <shortName evidence="2">GSH-S</shortName>
        <shortName evidence="2">GSHase</shortName>
    </alternativeName>
    <alternativeName>
        <fullName evidence="2">Glutathione synthase</fullName>
    </alternativeName>
</protein>
<organism>
    <name type="scientific">Xanthomonas campestris pv. campestris (strain ATCC 33913 / DSM 3586 / NCPPB 528 / LMG 568 / P 25)</name>
    <dbReference type="NCBI Taxonomy" id="190485"/>
    <lineage>
        <taxon>Bacteria</taxon>
        <taxon>Pseudomonadati</taxon>
        <taxon>Pseudomonadota</taxon>
        <taxon>Gammaproteobacteria</taxon>
        <taxon>Lysobacterales</taxon>
        <taxon>Lysobacteraceae</taxon>
        <taxon>Xanthomonas</taxon>
    </lineage>
</organism>
<dbReference type="EC" id="6.3.2.3" evidence="2"/>
<dbReference type="EMBL" id="AE008922">
    <property type="protein sequence ID" value="AAM42198.1"/>
    <property type="molecule type" value="Genomic_DNA"/>
</dbReference>
<dbReference type="RefSeq" id="NP_638274.1">
    <property type="nucleotide sequence ID" value="NC_003902.1"/>
</dbReference>
<dbReference type="RefSeq" id="WP_011038049.1">
    <property type="nucleotide sequence ID" value="NC_003902.1"/>
</dbReference>
<dbReference type="SMR" id="Q8P6P1"/>
<dbReference type="STRING" id="190485.XCC2926"/>
<dbReference type="EnsemblBacteria" id="AAM42198">
    <property type="protein sequence ID" value="AAM42198"/>
    <property type="gene ID" value="XCC2926"/>
</dbReference>
<dbReference type="KEGG" id="xcc:XCC2926"/>
<dbReference type="PATRIC" id="fig|190485.4.peg.3131"/>
<dbReference type="eggNOG" id="COG0189">
    <property type="taxonomic scope" value="Bacteria"/>
</dbReference>
<dbReference type="HOGENOM" id="CLU_068239_0_0_6"/>
<dbReference type="OrthoDB" id="9785415at2"/>
<dbReference type="UniPathway" id="UPA00142">
    <property type="reaction ID" value="UER00210"/>
</dbReference>
<dbReference type="Proteomes" id="UP000001010">
    <property type="component" value="Chromosome"/>
</dbReference>
<dbReference type="GO" id="GO:0005737">
    <property type="term" value="C:cytoplasm"/>
    <property type="evidence" value="ECO:0000318"/>
    <property type="project" value="GO_Central"/>
</dbReference>
<dbReference type="GO" id="GO:0005524">
    <property type="term" value="F:ATP binding"/>
    <property type="evidence" value="ECO:0007669"/>
    <property type="project" value="UniProtKB-UniRule"/>
</dbReference>
<dbReference type="GO" id="GO:0004363">
    <property type="term" value="F:glutathione synthase activity"/>
    <property type="evidence" value="ECO:0000318"/>
    <property type="project" value="GO_Central"/>
</dbReference>
<dbReference type="GO" id="GO:0046872">
    <property type="term" value="F:metal ion binding"/>
    <property type="evidence" value="ECO:0007669"/>
    <property type="project" value="UniProtKB-KW"/>
</dbReference>
<dbReference type="FunFam" id="3.30.1490.20:FF:000009">
    <property type="entry name" value="Glutathione synthetase"/>
    <property type="match status" value="1"/>
</dbReference>
<dbReference type="FunFam" id="3.30.470.20:FF:000010">
    <property type="entry name" value="Glutathione synthetase"/>
    <property type="match status" value="1"/>
</dbReference>
<dbReference type="FunFam" id="3.40.50.20:FF:000009">
    <property type="entry name" value="Glutathione synthetase"/>
    <property type="match status" value="1"/>
</dbReference>
<dbReference type="Gene3D" id="3.40.50.20">
    <property type="match status" value="1"/>
</dbReference>
<dbReference type="Gene3D" id="3.30.1490.20">
    <property type="entry name" value="ATP-grasp fold, A domain"/>
    <property type="match status" value="1"/>
</dbReference>
<dbReference type="Gene3D" id="3.30.470.20">
    <property type="entry name" value="ATP-grasp fold, B domain"/>
    <property type="match status" value="1"/>
</dbReference>
<dbReference type="HAMAP" id="MF_00162">
    <property type="entry name" value="GSH_S"/>
    <property type="match status" value="1"/>
</dbReference>
<dbReference type="InterPro" id="IPR011761">
    <property type="entry name" value="ATP-grasp"/>
</dbReference>
<dbReference type="InterPro" id="IPR013815">
    <property type="entry name" value="ATP_grasp_subdomain_1"/>
</dbReference>
<dbReference type="InterPro" id="IPR006284">
    <property type="entry name" value="Glut_synth_pro"/>
</dbReference>
<dbReference type="InterPro" id="IPR004218">
    <property type="entry name" value="GSHS_ATP-bd"/>
</dbReference>
<dbReference type="InterPro" id="IPR004215">
    <property type="entry name" value="GSHS_N"/>
</dbReference>
<dbReference type="InterPro" id="IPR016185">
    <property type="entry name" value="PreATP-grasp_dom_sf"/>
</dbReference>
<dbReference type="NCBIfam" id="TIGR01380">
    <property type="entry name" value="glut_syn"/>
    <property type="match status" value="1"/>
</dbReference>
<dbReference type="NCBIfam" id="NF003573">
    <property type="entry name" value="PRK05246.1"/>
    <property type="match status" value="1"/>
</dbReference>
<dbReference type="PANTHER" id="PTHR21621:SF4">
    <property type="entry name" value="GLUTATHIONE SYNTHETASE"/>
    <property type="match status" value="1"/>
</dbReference>
<dbReference type="PANTHER" id="PTHR21621">
    <property type="entry name" value="RIBOSOMAL PROTEIN S6 MODIFICATION PROTEIN"/>
    <property type="match status" value="1"/>
</dbReference>
<dbReference type="Pfam" id="PF02955">
    <property type="entry name" value="GSH-S_ATP"/>
    <property type="match status" value="1"/>
</dbReference>
<dbReference type="Pfam" id="PF02951">
    <property type="entry name" value="GSH-S_N"/>
    <property type="match status" value="1"/>
</dbReference>
<dbReference type="SUPFAM" id="SSF56059">
    <property type="entry name" value="Glutathione synthetase ATP-binding domain-like"/>
    <property type="match status" value="1"/>
</dbReference>
<dbReference type="SUPFAM" id="SSF52440">
    <property type="entry name" value="PreATP-grasp domain"/>
    <property type="match status" value="1"/>
</dbReference>
<dbReference type="PROSITE" id="PS50975">
    <property type="entry name" value="ATP_GRASP"/>
    <property type="match status" value="1"/>
</dbReference>
<gene>
    <name evidence="2" type="primary">gshB</name>
    <name type="ordered locus">XCC2926</name>
</gene>